<feature type="chain" id="PRO_0000221391" description="E3 ubiquitin-protein ligase MIR1">
    <location>
        <begin position="1"/>
        <end position="201"/>
    </location>
</feature>
<feature type="topological domain" description="Cytoplasmic" evidence="2">
    <location>
        <begin position="1"/>
        <end position="81"/>
    </location>
</feature>
<feature type="transmembrane region" description="Helical" evidence="2">
    <location>
        <begin position="82"/>
        <end position="102"/>
    </location>
</feature>
<feature type="topological domain" description="Extracellular" evidence="2">
    <location>
        <begin position="103"/>
        <end position="113"/>
    </location>
</feature>
<feature type="transmembrane region" description="Helical" evidence="2">
    <location>
        <begin position="114"/>
        <end position="134"/>
    </location>
</feature>
<feature type="topological domain" description="Cytoplasmic" evidence="2">
    <location>
        <begin position="135"/>
        <end position="201"/>
    </location>
</feature>
<feature type="zinc finger region" description="RING-CH-type" evidence="3">
    <location>
        <begin position="1"/>
        <end position="58"/>
    </location>
</feature>
<feature type="region of interest" description="DIRT">
    <location>
        <begin position="52"/>
        <end position="79"/>
    </location>
</feature>
<feature type="binding site" evidence="3">
    <location>
        <position position="8"/>
    </location>
    <ligand>
        <name>Zn(2+)</name>
        <dbReference type="ChEBI" id="CHEBI:29105"/>
        <label>1</label>
    </ligand>
</feature>
<feature type="binding site" evidence="3">
    <location>
        <position position="11"/>
    </location>
    <ligand>
        <name>Zn(2+)</name>
        <dbReference type="ChEBI" id="CHEBI:29105"/>
        <label>1</label>
    </ligand>
</feature>
<feature type="binding site" evidence="3">
    <location>
        <position position="22"/>
    </location>
    <ligand>
        <name>Zn(2+)</name>
        <dbReference type="ChEBI" id="CHEBI:29105"/>
        <label>2</label>
    </ligand>
</feature>
<feature type="binding site" evidence="3">
    <location>
        <position position="24"/>
    </location>
    <ligand>
        <name>Zn(2+)</name>
        <dbReference type="ChEBI" id="CHEBI:29105"/>
        <label>2</label>
    </ligand>
</feature>
<feature type="binding site" evidence="3">
    <location>
        <position position="32"/>
    </location>
    <ligand>
        <name>Zn(2+)</name>
        <dbReference type="ChEBI" id="CHEBI:29105"/>
        <label>1</label>
    </ligand>
</feature>
<feature type="binding site" evidence="3">
    <location>
        <position position="35"/>
    </location>
    <ligand>
        <name>Zn(2+)</name>
        <dbReference type="ChEBI" id="CHEBI:29105"/>
        <label>1</label>
    </ligand>
</feature>
<feature type="binding site" evidence="3">
    <location>
        <position position="48"/>
    </location>
    <ligand>
        <name>Zn(2+)</name>
        <dbReference type="ChEBI" id="CHEBI:29105"/>
        <label>2</label>
    </ligand>
</feature>
<feature type="binding site" evidence="3">
    <location>
        <position position="51"/>
    </location>
    <ligand>
        <name>Zn(2+)</name>
        <dbReference type="ChEBI" id="CHEBI:29105"/>
        <label>2</label>
    </ligand>
</feature>
<feature type="mutagenesis site" description="Abolishes E3 ligase activity." evidence="6">
    <original>W</original>
    <variation>R</variation>
    <location>
        <position position="9"/>
    </location>
</feature>
<evidence type="ECO:0000250" key="1">
    <source>
        <dbReference type="UniProtKB" id="P90495"/>
    </source>
</evidence>
<evidence type="ECO:0000255" key="2"/>
<evidence type="ECO:0000255" key="3">
    <source>
        <dbReference type="PROSITE-ProRule" id="PRU00623"/>
    </source>
</evidence>
<evidence type="ECO:0000269" key="4">
    <source>
    </source>
</evidence>
<evidence type="ECO:0000269" key="5">
    <source>
    </source>
</evidence>
<evidence type="ECO:0000269" key="6">
    <source>
    </source>
</evidence>
<evidence type="ECO:0000269" key="7">
    <source>
    </source>
</evidence>
<evidence type="ECO:0000269" key="8">
    <source>
    </source>
</evidence>
<evidence type="ECO:0000305" key="9"/>
<accession>O41933</accession>
<dbReference type="EC" id="2.3.2.36" evidence="1"/>
<dbReference type="EMBL" id="U97553">
    <property type="protein sequence ID" value="AAB66429.1"/>
    <property type="molecule type" value="Genomic_DNA"/>
</dbReference>
<dbReference type="EMBL" id="AF105037">
    <property type="protein sequence ID" value="AAF19280.1"/>
    <property type="molecule type" value="Genomic_DNA"/>
</dbReference>
<dbReference type="EMBL" id="AF324455">
    <property type="protein sequence ID" value="AAK16705.1"/>
    <property type="molecule type" value="Genomic_DNA"/>
</dbReference>
<dbReference type="SMR" id="O41933"/>
<dbReference type="KEGG" id="vg:1497186"/>
<dbReference type="OrthoDB" id="27994at10239"/>
<dbReference type="UniPathway" id="UPA00143"/>
<dbReference type="Proteomes" id="UP000099649">
    <property type="component" value="Genome"/>
</dbReference>
<dbReference type="Proteomes" id="UP000175018">
    <property type="component" value="Genome"/>
</dbReference>
<dbReference type="GO" id="GO:0044167">
    <property type="term" value="C:host cell endoplasmic reticulum membrane"/>
    <property type="evidence" value="ECO:0007669"/>
    <property type="project" value="UniProtKB-SubCell"/>
</dbReference>
<dbReference type="GO" id="GO:0016020">
    <property type="term" value="C:membrane"/>
    <property type="evidence" value="ECO:0007669"/>
    <property type="project" value="UniProtKB-KW"/>
</dbReference>
<dbReference type="GO" id="GO:0016740">
    <property type="term" value="F:transferase activity"/>
    <property type="evidence" value="ECO:0007669"/>
    <property type="project" value="UniProtKB-KW"/>
</dbReference>
<dbReference type="GO" id="GO:0008270">
    <property type="term" value="F:zinc ion binding"/>
    <property type="evidence" value="ECO:0007669"/>
    <property type="project" value="UniProtKB-KW"/>
</dbReference>
<dbReference type="GO" id="GO:0016567">
    <property type="term" value="P:protein ubiquitination"/>
    <property type="evidence" value="ECO:0007669"/>
    <property type="project" value="UniProtKB-UniPathway"/>
</dbReference>
<dbReference type="GO" id="GO:0046776">
    <property type="term" value="P:symbiont-mediated suppression of host antigen processing and presentation of peptide antigen via MHC class I"/>
    <property type="evidence" value="ECO:0007669"/>
    <property type="project" value="UniProtKB-KW"/>
</dbReference>
<dbReference type="Gene3D" id="3.30.40.10">
    <property type="entry name" value="Zinc/RING finger domain, C3HC4 (zinc finger)"/>
    <property type="match status" value="1"/>
</dbReference>
<dbReference type="InterPro" id="IPR011016">
    <property type="entry name" value="Znf_RING-CH"/>
</dbReference>
<dbReference type="InterPro" id="IPR013083">
    <property type="entry name" value="Znf_RING/FYVE/PHD"/>
</dbReference>
<dbReference type="PANTHER" id="PTHR46065">
    <property type="entry name" value="E3 UBIQUITIN-PROTEIN LIGASE MARCH 2/3 FAMILY MEMBER"/>
    <property type="match status" value="1"/>
</dbReference>
<dbReference type="PANTHER" id="PTHR46065:SF3">
    <property type="entry name" value="FI20425P1"/>
    <property type="match status" value="1"/>
</dbReference>
<dbReference type="Pfam" id="PF12906">
    <property type="entry name" value="RINGv"/>
    <property type="match status" value="1"/>
</dbReference>
<dbReference type="SMART" id="SM00744">
    <property type="entry name" value="RINGv"/>
    <property type="match status" value="1"/>
</dbReference>
<dbReference type="SUPFAM" id="SSF57850">
    <property type="entry name" value="RING/U-box"/>
    <property type="match status" value="1"/>
</dbReference>
<dbReference type="PROSITE" id="PS51292">
    <property type="entry name" value="ZF_RING_CH"/>
    <property type="match status" value="1"/>
</dbReference>
<organism>
    <name type="scientific">Murid herpesvirus 4</name>
    <name type="common">MuHV-4</name>
    <name type="synonym">Murine gammaherpesvirus 68</name>
    <dbReference type="NCBI Taxonomy" id="33708"/>
    <lineage>
        <taxon>Viruses</taxon>
        <taxon>Duplodnaviria</taxon>
        <taxon>Heunggongvirae</taxon>
        <taxon>Peploviricota</taxon>
        <taxon>Herviviricetes</taxon>
        <taxon>Herpesvirales</taxon>
        <taxon>Orthoherpesviridae</taxon>
        <taxon>Gammaherpesvirinae</taxon>
        <taxon>Rhadinovirus</taxon>
        <taxon>Rhadinovirus muridgamma4</taxon>
    </lineage>
</organism>
<protein>
    <recommendedName>
        <fullName>E3 ubiquitin-protein ligase MIR1</fullName>
        <ecNumber evidence="1">2.3.2.36</ecNumber>
    </recommendedName>
    <alternativeName>
        <fullName>MK3</fullName>
    </alternativeName>
    <alternativeName>
        <fullName>Modulator of immune recognition 1 homolog</fullName>
    </alternativeName>
    <alternativeName>
        <fullName>ORF K3</fullName>
    </alternativeName>
    <alternativeName>
        <fullName evidence="9">RING-type E3 ubiquitin transferase MIR1</fullName>
    </alternativeName>
</protein>
<name>MIR1_MHV68</name>
<reference key="1">
    <citation type="journal article" date="1997" name="J. Virol.">
        <title>Complete sequence and genomic analysis of murine gammaherpesvirus 68.</title>
        <authorList>
            <person name="Virgin H.W."/>
            <person name="Latreille P."/>
            <person name="Wamsley P."/>
            <person name="Hallsworth K."/>
            <person name="Weck K.E."/>
            <person name="Dal Canto A.J."/>
            <person name="Speck S.H."/>
        </authorList>
    </citation>
    <scope>NUCLEOTIDE SEQUENCE [LARGE SCALE GENOMIC DNA]</scope>
    <source>
        <strain>Isolate g2.4</strain>
        <strain>Isolate WUMS</strain>
    </source>
</reference>
<reference key="2">
    <citation type="journal article" date="1990" name="J. Gen. Virol.">
        <title>Cloning and molecular characterization of the murine herpesvirus 68 genome.</title>
        <authorList>
            <person name="Efstathiou S."/>
            <person name="Ho Y.M."/>
            <person name="Minson A.C."/>
        </authorList>
    </citation>
    <scope>NUCLEOTIDE SEQUENCE [LARGE SCALE GENOMIC DNA]</scope>
    <source>
        <strain>Isolate g2.4</strain>
    </source>
</reference>
<reference key="3">
    <citation type="journal article" date="2001" name="J. Virol.">
        <title>Analysis of a novel strain of murine gammaherpesvirus reveals a genomic locus important for acute pathogenesis.</title>
        <authorList>
            <person name="Macrae A.I."/>
            <person name="Dutia B.M."/>
            <person name="Milligan S."/>
            <person name="Brownstein D.G."/>
            <person name="Allen D.J."/>
            <person name="Mistrikova J."/>
            <person name="Davison A.J."/>
            <person name="Nash A.A."/>
            <person name="Stewart J.P."/>
        </authorList>
    </citation>
    <scope>NUCLEOTIDE SEQUENCE [LARGE SCALE GENOMIC DNA]</scope>
    <source>
        <strain>MHV76</strain>
    </source>
</reference>
<reference key="4">
    <citation type="journal article" date="2000" name="Proc. Natl. Acad. Sci. U.S.A.">
        <title>Inhibition of MHC class I-restricted antigen presentation by gamma 2-herpesviruses.</title>
        <authorList>
            <person name="Stevenson P.G."/>
            <person name="Efstathiou S."/>
            <person name="Doherty P.C."/>
            <person name="Lehner P.J."/>
        </authorList>
    </citation>
    <scope>FUNCTION</scope>
</reference>
<reference key="5">
    <citation type="journal article" date="2001" name="Immunity">
        <title>MHC class I ubiquitination by a viral PHD/LAP finger protein.</title>
        <authorList>
            <person name="Boname J.M."/>
            <person name="Stevenson P.G."/>
        </authorList>
    </citation>
    <scope>FUNCTION</scope>
    <scope>DOMAIN RING-CH-TYPE ZINC-FINGER</scope>
    <scope>SUBCELLULAR LOCATION</scope>
</reference>
<reference key="6">
    <citation type="journal article" date="2003" name="Cell Cycle">
        <title>Scores of RINGS but no PHDs in ubiquitin signaling.</title>
        <authorList>
            <person name="Aravind L."/>
            <person name="Iyer L.M."/>
            <person name="Koonin E.V."/>
        </authorList>
    </citation>
    <scope>DOMAIN RING-CH-TYPE ZINC-FINGER</scope>
</reference>
<reference key="7">
    <citation type="journal article" date="2007" name="J. Cell Biol.">
        <title>Ubiquitination of serine, threonine, or lysine residues on the cytoplasmic tail can induce ERAD of MHC-I by viral E3 ligase mK3.</title>
        <authorList>
            <person name="Wang X."/>
            <person name="Herr R.A."/>
            <person name="Chua W.J."/>
            <person name="Lybarger L."/>
            <person name="Wiertz E.J."/>
            <person name="Hansen T.H."/>
        </authorList>
    </citation>
    <scope>FUNCTION</scope>
    <scope>DOMAIN DIRT</scope>
    <scope>MUTAGENESIS OF TRP-9</scope>
</reference>
<reference key="8">
    <citation type="journal article" date="2009" name="Traffic">
        <title>Role of the RING-CH domain of viral ligase mK3 in ubiquitination of non-lysine and lysine MHC I residues.</title>
        <authorList>
            <person name="Herr R.A."/>
            <person name="Harris J."/>
            <person name="Fang S."/>
            <person name="Wang X."/>
            <person name="Hansen T.H."/>
        </authorList>
    </citation>
    <scope>FUNCTION</scope>
</reference>
<reference key="9">
    <citation type="journal article" date="2009" name="J. Cell Biol.">
        <title>Ube2j2 ubiquitinates hydroxylated amino acids on ER-associated degradation substrates.</title>
        <authorList>
            <person name="Wang X."/>
            <person name="Herr R.A."/>
            <person name="Rabelink M."/>
            <person name="Hoeben R.C."/>
            <person name="Wiertz E.J."/>
            <person name="Hansen T.H."/>
        </authorList>
    </citation>
    <scope>FUNCTION</scope>
    <scope>INTERACTION WITH HOST UBE2J2</scope>
</reference>
<organismHost>
    <name type="scientific">Apodemus sylvaticus</name>
    <name type="common">European woodmouse</name>
    <dbReference type="NCBI Taxonomy" id="10129"/>
</organismHost>
<comment type="function">
    <text evidence="4 5 6 7 8">E3 ubiquitin-protein ligase that mediates ubiquitination of host surface class I (MHC-I) H-2D(b)/H2-D1 and H-2K(b)/H2-K1 molecules before they exit the endoplasmic reticulum, leading to their degradation by the endoplasmic reticulum-associated degradation (ERAD) system, thus blocking the immune detection of virus-infected cells. Mediates ubiquitination of lysine, as well as serine and threonine residues present in the cytoplasmic tail of surface class I molecules. Promotes ubiquitination of hydroxylated serine or threonine residues via ester bonds instead of the classical isopeptide linkage.</text>
</comment>
<comment type="catalytic activity">
    <reaction evidence="1">
        <text>[E2 ubiquitin-conjugating enzyme]-S-ubiquitinyl-L-cysteine + [acceptor protein]-L-cysteine = [E2 ubiquitin-conjugating enzyme]-L-cysteine + [acceptor protein]-S-ubiquitinyl-L-cysteine.</text>
        <dbReference type="EC" id="2.3.2.36"/>
    </reaction>
</comment>
<comment type="pathway">
    <text>Protein modification; protein ubiquitination.</text>
</comment>
<comment type="subunit">
    <text evidence="8">Interacts with host UBE2J2.</text>
</comment>
<comment type="subcellular location">
    <subcellularLocation>
        <location evidence="5">Host endoplasmic reticulum membrane</location>
        <topology evidence="5">Multi-pass membrane protein</topology>
    </subcellularLocation>
</comment>
<comment type="domain">
    <text>The DIRT (domain in between the RING-CH-type and the first transmembrane) region is essential to determine substrate residues that can be ubiquitinated.</text>
</comment>
<comment type="domain">
    <text>The RING-CH-type zinc finger (also named RINGV-type zinc-finger) mediates the E3 ubiquitin ligase activity.</text>
</comment>
<comment type="miscellaneous">
    <text>Murine herpesvirus 76 (MHV76) is identical to murine herpesvirus 68 except for a large deletion at the genome left end of the unique region.</text>
</comment>
<proteinExistence type="evidence at protein level"/>
<gene>
    <name type="primary">K3</name>
</gene>
<keyword id="KW-0244">Early protein</keyword>
<keyword id="KW-1038">Host endoplasmic reticulum</keyword>
<keyword id="KW-1043">Host membrane</keyword>
<keyword id="KW-0945">Host-virus interaction</keyword>
<keyword id="KW-1080">Inhibition of host adaptive immune response by virus</keyword>
<keyword id="KW-1115">Inhibition of host MHC class I molecule presentation by virus</keyword>
<keyword id="KW-0472">Membrane</keyword>
<keyword id="KW-0479">Metal-binding</keyword>
<keyword id="KW-1185">Reference proteome</keyword>
<keyword id="KW-0808">Transferase</keyword>
<keyword id="KW-0812">Transmembrane</keyword>
<keyword id="KW-1133">Transmembrane helix</keyword>
<keyword id="KW-0833">Ubl conjugation pathway</keyword>
<keyword id="KW-0899">Viral immunoevasion</keyword>
<keyword id="KW-0862">Zinc</keyword>
<keyword id="KW-0863">Zinc-finger</keyword>
<sequence>MDSTGEFCWICHQPEGPLKRFCGCKGSCAVSHQDCLRGWLETSRRQTCALCGTPYSMKWKTKPLREWTWGEEEVLAAMEACLPLVLIPLAVLMIVMGTWLLVNHNGFLSPRMQVVLVVIVLLAMIVFSASASYVMVEGPGCLDTCTAKNSTVTVNSIDEAIATQQPTKTDLGLARETLSTRFRRGKCRSCCRLGCVRLCCV</sequence>